<proteinExistence type="inferred from homology"/>
<reference key="1">
    <citation type="journal article" date="2003" name="Nat. Biotechnol.">
        <title>The genome sequence of the entomopathogenic bacterium Photorhabdus luminescens.</title>
        <authorList>
            <person name="Duchaud E."/>
            <person name="Rusniok C."/>
            <person name="Frangeul L."/>
            <person name="Buchrieser C."/>
            <person name="Givaudan A."/>
            <person name="Taourit S."/>
            <person name="Bocs S."/>
            <person name="Boursaux-Eude C."/>
            <person name="Chandler M."/>
            <person name="Charles J.-F."/>
            <person name="Dassa E."/>
            <person name="Derose R."/>
            <person name="Derzelle S."/>
            <person name="Freyssinet G."/>
            <person name="Gaudriault S."/>
            <person name="Medigue C."/>
            <person name="Lanois A."/>
            <person name="Powell K."/>
            <person name="Siguier P."/>
            <person name="Vincent R."/>
            <person name="Wingate V."/>
            <person name="Zouine M."/>
            <person name="Glaser P."/>
            <person name="Boemare N."/>
            <person name="Danchin A."/>
            <person name="Kunst F."/>
        </authorList>
    </citation>
    <scope>NUCLEOTIDE SEQUENCE [LARGE SCALE GENOMIC DNA]</scope>
    <source>
        <strain>DSM 15139 / CIP 105565 / TT01</strain>
    </source>
</reference>
<name>F16PA_PHOLL</name>
<feature type="chain" id="PRO_0000364627" description="Fructose-1,6-bisphosphatase class 1">
    <location>
        <begin position="1"/>
        <end position="334"/>
    </location>
</feature>
<feature type="binding site" evidence="1">
    <location>
        <position position="89"/>
    </location>
    <ligand>
        <name>Mg(2+)</name>
        <dbReference type="ChEBI" id="CHEBI:18420"/>
        <label>1</label>
    </ligand>
</feature>
<feature type="binding site" evidence="1">
    <location>
        <position position="112"/>
    </location>
    <ligand>
        <name>Mg(2+)</name>
        <dbReference type="ChEBI" id="CHEBI:18420"/>
        <label>1</label>
    </ligand>
</feature>
<feature type="binding site" evidence="1">
    <location>
        <position position="112"/>
    </location>
    <ligand>
        <name>Mg(2+)</name>
        <dbReference type="ChEBI" id="CHEBI:18420"/>
        <label>2</label>
    </ligand>
</feature>
<feature type="binding site" evidence="1">
    <location>
        <position position="114"/>
    </location>
    <ligand>
        <name>Mg(2+)</name>
        <dbReference type="ChEBI" id="CHEBI:18420"/>
        <label>1</label>
    </ligand>
</feature>
<feature type="binding site" evidence="1">
    <location>
        <begin position="115"/>
        <end position="118"/>
    </location>
    <ligand>
        <name>substrate</name>
    </ligand>
</feature>
<feature type="binding site" evidence="1">
    <location>
        <position position="115"/>
    </location>
    <ligand>
        <name>Mg(2+)</name>
        <dbReference type="ChEBI" id="CHEBI:18420"/>
        <label>2</label>
    </ligand>
</feature>
<feature type="binding site" evidence="1">
    <location>
        <position position="208"/>
    </location>
    <ligand>
        <name>substrate</name>
    </ligand>
</feature>
<feature type="binding site" evidence="1">
    <location>
        <position position="241"/>
    </location>
    <ligand>
        <name>substrate</name>
    </ligand>
</feature>
<feature type="binding site" evidence="1">
    <location>
        <position position="271"/>
    </location>
    <ligand>
        <name>substrate</name>
    </ligand>
</feature>
<feature type="binding site" evidence="1">
    <location>
        <position position="277"/>
    </location>
    <ligand>
        <name>Mg(2+)</name>
        <dbReference type="ChEBI" id="CHEBI:18420"/>
        <label>2</label>
    </ligand>
</feature>
<organism>
    <name type="scientific">Photorhabdus laumondii subsp. laumondii (strain DSM 15139 / CIP 105565 / TT01)</name>
    <name type="common">Photorhabdus luminescens subsp. laumondii</name>
    <dbReference type="NCBI Taxonomy" id="243265"/>
    <lineage>
        <taxon>Bacteria</taxon>
        <taxon>Pseudomonadati</taxon>
        <taxon>Pseudomonadota</taxon>
        <taxon>Gammaproteobacteria</taxon>
        <taxon>Enterobacterales</taxon>
        <taxon>Morganellaceae</taxon>
        <taxon>Photorhabdus</taxon>
    </lineage>
</organism>
<dbReference type="EC" id="3.1.3.11" evidence="1"/>
<dbReference type="EMBL" id="BX571874">
    <property type="protein sequence ID" value="CAE16922.1"/>
    <property type="molecule type" value="Genomic_DNA"/>
</dbReference>
<dbReference type="RefSeq" id="WP_011148626.1">
    <property type="nucleotide sequence ID" value="NC_005126.1"/>
</dbReference>
<dbReference type="SMR" id="Q7MYW6"/>
<dbReference type="STRING" id="243265.plu4550"/>
<dbReference type="GeneID" id="48850761"/>
<dbReference type="KEGG" id="plu:plu4550"/>
<dbReference type="eggNOG" id="COG0158">
    <property type="taxonomic scope" value="Bacteria"/>
</dbReference>
<dbReference type="HOGENOM" id="CLU_039977_2_2_6"/>
<dbReference type="OrthoDB" id="9806756at2"/>
<dbReference type="UniPathway" id="UPA00138"/>
<dbReference type="Proteomes" id="UP000002514">
    <property type="component" value="Chromosome"/>
</dbReference>
<dbReference type="GO" id="GO:0005829">
    <property type="term" value="C:cytosol"/>
    <property type="evidence" value="ECO:0007669"/>
    <property type="project" value="TreeGrafter"/>
</dbReference>
<dbReference type="GO" id="GO:0042132">
    <property type="term" value="F:fructose 1,6-bisphosphate 1-phosphatase activity"/>
    <property type="evidence" value="ECO:0007669"/>
    <property type="project" value="UniProtKB-UniRule"/>
</dbReference>
<dbReference type="GO" id="GO:0000287">
    <property type="term" value="F:magnesium ion binding"/>
    <property type="evidence" value="ECO:0007669"/>
    <property type="project" value="UniProtKB-UniRule"/>
</dbReference>
<dbReference type="GO" id="GO:0030388">
    <property type="term" value="P:fructose 1,6-bisphosphate metabolic process"/>
    <property type="evidence" value="ECO:0007669"/>
    <property type="project" value="TreeGrafter"/>
</dbReference>
<dbReference type="GO" id="GO:0006002">
    <property type="term" value="P:fructose 6-phosphate metabolic process"/>
    <property type="evidence" value="ECO:0007669"/>
    <property type="project" value="TreeGrafter"/>
</dbReference>
<dbReference type="GO" id="GO:0006000">
    <property type="term" value="P:fructose metabolic process"/>
    <property type="evidence" value="ECO:0007669"/>
    <property type="project" value="TreeGrafter"/>
</dbReference>
<dbReference type="GO" id="GO:0006094">
    <property type="term" value="P:gluconeogenesis"/>
    <property type="evidence" value="ECO:0007669"/>
    <property type="project" value="UniProtKB-UniRule"/>
</dbReference>
<dbReference type="GO" id="GO:0005986">
    <property type="term" value="P:sucrose biosynthetic process"/>
    <property type="evidence" value="ECO:0007669"/>
    <property type="project" value="TreeGrafter"/>
</dbReference>
<dbReference type="CDD" id="cd00354">
    <property type="entry name" value="FBPase"/>
    <property type="match status" value="1"/>
</dbReference>
<dbReference type="FunFam" id="3.30.540.10:FF:000002">
    <property type="entry name" value="Fructose-1,6-bisphosphatase class 1"/>
    <property type="match status" value="1"/>
</dbReference>
<dbReference type="FunFam" id="3.40.190.80:FF:000001">
    <property type="entry name" value="Fructose-1,6-bisphosphatase class 1"/>
    <property type="match status" value="1"/>
</dbReference>
<dbReference type="Gene3D" id="3.40.190.80">
    <property type="match status" value="1"/>
</dbReference>
<dbReference type="Gene3D" id="3.30.540.10">
    <property type="entry name" value="Fructose-1,6-Bisphosphatase, subunit A, domain 1"/>
    <property type="match status" value="1"/>
</dbReference>
<dbReference type="HAMAP" id="MF_01855">
    <property type="entry name" value="FBPase_class1"/>
    <property type="match status" value="1"/>
</dbReference>
<dbReference type="InterPro" id="IPR044015">
    <property type="entry name" value="FBPase_C_dom"/>
</dbReference>
<dbReference type="InterPro" id="IPR000146">
    <property type="entry name" value="FBPase_class-1"/>
</dbReference>
<dbReference type="InterPro" id="IPR033391">
    <property type="entry name" value="FBPase_N"/>
</dbReference>
<dbReference type="InterPro" id="IPR028343">
    <property type="entry name" value="FBPtase"/>
</dbReference>
<dbReference type="InterPro" id="IPR020548">
    <property type="entry name" value="Fructose_bisphosphatase_AS"/>
</dbReference>
<dbReference type="NCBIfam" id="NF006778">
    <property type="entry name" value="PRK09293.1-1"/>
    <property type="match status" value="1"/>
</dbReference>
<dbReference type="NCBIfam" id="NF006779">
    <property type="entry name" value="PRK09293.1-3"/>
    <property type="match status" value="1"/>
</dbReference>
<dbReference type="PANTHER" id="PTHR11556">
    <property type="entry name" value="FRUCTOSE-1,6-BISPHOSPHATASE-RELATED"/>
    <property type="match status" value="1"/>
</dbReference>
<dbReference type="PANTHER" id="PTHR11556:SF35">
    <property type="entry name" value="SEDOHEPTULOSE-1,7-BISPHOSPHATASE, CHLOROPLASTIC"/>
    <property type="match status" value="1"/>
</dbReference>
<dbReference type="Pfam" id="PF00316">
    <property type="entry name" value="FBPase"/>
    <property type="match status" value="1"/>
</dbReference>
<dbReference type="Pfam" id="PF18913">
    <property type="entry name" value="FBPase_C"/>
    <property type="match status" value="1"/>
</dbReference>
<dbReference type="PIRSF" id="PIRSF500210">
    <property type="entry name" value="FBPtase"/>
    <property type="match status" value="1"/>
</dbReference>
<dbReference type="PIRSF" id="PIRSF000904">
    <property type="entry name" value="FBPtase_SBPase"/>
    <property type="match status" value="1"/>
</dbReference>
<dbReference type="PRINTS" id="PR00115">
    <property type="entry name" value="F16BPHPHTASE"/>
</dbReference>
<dbReference type="SUPFAM" id="SSF56655">
    <property type="entry name" value="Carbohydrate phosphatase"/>
    <property type="match status" value="1"/>
</dbReference>
<dbReference type="PROSITE" id="PS00124">
    <property type="entry name" value="FBPASE"/>
    <property type="match status" value="1"/>
</dbReference>
<gene>
    <name evidence="1" type="primary">fbp</name>
    <name type="ordered locus">plu4550</name>
</gene>
<sequence>MKTLGEFIVEKQQDFSHATGELTALLSAIKLGAKIIHRDINKAGLVDILGTSGVSNVQGEVQMKLDLYANEKLKAALKARGEVAGIASEEEDDIVIFEGDRAENAKYVVLMDPLDGSSNIDVNVSVGTIFSIYRRITPIGQPVTEKDFLQPGHRQVAAGYVVYGSSTMLVYTTGCGVHAFTYDPSLGVFCLSHEKVQFPPNGNMYSINEGNYIKFPMGVKKYIKYCQEQDEATQRPYTTRYIGSLVADFHRNLLKGGIYIYPSTASHPSGKLRLLYECNPMAFLAEQAGGKASDGANRILDITPSKLHQRVPFFVGSKSMVEKAESFMAEFPDE</sequence>
<accession>Q7MYW6</accession>
<keyword id="KW-0119">Carbohydrate metabolism</keyword>
<keyword id="KW-0963">Cytoplasm</keyword>
<keyword id="KW-0378">Hydrolase</keyword>
<keyword id="KW-0460">Magnesium</keyword>
<keyword id="KW-0479">Metal-binding</keyword>
<keyword id="KW-1185">Reference proteome</keyword>
<evidence type="ECO:0000255" key="1">
    <source>
        <dbReference type="HAMAP-Rule" id="MF_01855"/>
    </source>
</evidence>
<comment type="catalytic activity">
    <reaction evidence="1">
        <text>beta-D-fructose 1,6-bisphosphate + H2O = beta-D-fructose 6-phosphate + phosphate</text>
        <dbReference type="Rhea" id="RHEA:11064"/>
        <dbReference type="ChEBI" id="CHEBI:15377"/>
        <dbReference type="ChEBI" id="CHEBI:32966"/>
        <dbReference type="ChEBI" id="CHEBI:43474"/>
        <dbReference type="ChEBI" id="CHEBI:57634"/>
        <dbReference type="EC" id="3.1.3.11"/>
    </reaction>
</comment>
<comment type="cofactor">
    <cofactor evidence="1">
        <name>Mg(2+)</name>
        <dbReference type="ChEBI" id="CHEBI:18420"/>
    </cofactor>
    <text evidence="1">Binds 2 magnesium ions per subunit.</text>
</comment>
<comment type="pathway">
    <text evidence="1">Carbohydrate biosynthesis; gluconeogenesis.</text>
</comment>
<comment type="subunit">
    <text evidence="1">Homotetramer.</text>
</comment>
<comment type="subcellular location">
    <subcellularLocation>
        <location evidence="1">Cytoplasm</location>
    </subcellularLocation>
</comment>
<comment type="similarity">
    <text evidence="1">Belongs to the FBPase class 1 family.</text>
</comment>
<protein>
    <recommendedName>
        <fullName evidence="1">Fructose-1,6-bisphosphatase class 1</fullName>
        <shortName evidence="1">FBPase class 1</shortName>
        <ecNumber evidence="1">3.1.3.11</ecNumber>
    </recommendedName>
    <alternativeName>
        <fullName evidence="1">D-fructose-1,6-bisphosphate 1-phosphohydrolase class 1</fullName>
    </alternativeName>
</protein>